<accession>B4JZG4</accession>
<evidence type="ECO:0000250" key="1">
    <source>
        <dbReference type="UniProtKB" id="O76927"/>
    </source>
</evidence>
<evidence type="ECO:0000250" key="2">
    <source>
        <dbReference type="UniProtKB" id="P63220"/>
    </source>
</evidence>
<evidence type="ECO:0000250" key="3">
    <source>
        <dbReference type="UniProtKB" id="P63221"/>
    </source>
</evidence>
<evidence type="ECO:0000255" key="4"/>
<evidence type="ECO:0000305" key="5"/>
<evidence type="ECO:0000312" key="6">
    <source>
        <dbReference type="EMBL" id="EDV94086.1"/>
    </source>
</evidence>
<dbReference type="EMBL" id="CH916379">
    <property type="protein sequence ID" value="EDV94086.1"/>
    <property type="status" value="ALT_SEQ"/>
    <property type="molecule type" value="Genomic_DNA"/>
</dbReference>
<dbReference type="RefSeq" id="XP_001996355.1">
    <property type="nucleotide sequence ID" value="XM_001996319.1"/>
</dbReference>
<dbReference type="SMR" id="B4JZG4"/>
<dbReference type="FunCoup" id="B4JZG4">
    <property type="interactions" value="1390"/>
</dbReference>
<dbReference type="STRING" id="7222.B4JZG4"/>
<dbReference type="EnsemblMetazoa" id="FBtr0460192">
    <property type="protein sequence ID" value="FBpp0410623"/>
    <property type="gene ID" value="FBgn0132591"/>
</dbReference>
<dbReference type="EnsemblMetazoa" id="XM_001996319.2">
    <property type="protein sequence ID" value="XP_001996355.2"/>
    <property type="gene ID" value="LOC6570121"/>
</dbReference>
<dbReference type="GeneID" id="6570121"/>
<dbReference type="KEGG" id="dgr:6570121"/>
<dbReference type="CTD" id="6227"/>
<dbReference type="eggNOG" id="KOG3486">
    <property type="taxonomic scope" value="Eukaryota"/>
</dbReference>
<dbReference type="InParanoid" id="B4JZG4"/>
<dbReference type="OrthoDB" id="278325at2759"/>
<dbReference type="ChiTaRS" id="RpS21">
    <property type="organism name" value="fly"/>
</dbReference>
<dbReference type="Proteomes" id="UP000001070">
    <property type="component" value="Unassembled WGS sequence"/>
</dbReference>
<dbReference type="GO" id="GO:0005829">
    <property type="term" value="C:cytosol"/>
    <property type="evidence" value="ECO:0007669"/>
    <property type="project" value="UniProtKB-SubCell"/>
</dbReference>
<dbReference type="GO" id="GO:1990904">
    <property type="term" value="C:ribonucleoprotein complex"/>
    <property type="evidence" value="ECO:0007669"/>
    <property type="project" value="UniProtKB-KW"/>
</dbReference>
<dbReference type="GO" id="GO:0005840">
    <property type="term" value="C:ribosome"/>
    <property type="evidence" value="ECO:0000250"/>
    <property type="project" value="UniProtKB"/>
</dbReference>
<dbReference type="GO" id="GO:0005791">
    <property type="term" value="C:rough endoplasmic reticulum"/>
    <property type="evidence" value="ECO:0007669"/>
    <property type="project" value="UniProtKB-SubCell"/>
</dbReference>
<dbReference type="GO" id="GO:0043022">
    <property type="term" value="F:ribosome binding"/>
    <property type="evidence" value="ECO:0000250"/>
    <property type="project" value="UniProtKB"/>
</dbReference>
<dbReference type="GO" id="GO:0003735">
    <property type="term" value="F:structural constituent of ribosome"/>
    <property type="evidence" value="ECO:0007669"/>
    <property type="project" value="InterPro"/>
</dbReference>
<dbReference type="GO" id="GO:0042127">
    <property type="term" value="P:regulation of cell population proliferation"/>
    <property type="evidence" value="ECO:0000250"/>
    <property type="project" value="UniProtKB"/>
</dbReference>
<dbReference type="GO" id="GO:0006417">
    <property type="term" value="P:regulation of translation"/>
    <property type="evidence" value="ECO:0007669"/>
    <property type="project" value="UniProtKB-KW"/>
</dbReference>
<dbReference type="GO" id="GO:0006364">
    <property type="term" value="P:rRNA processing"/>
    <property type="evidence" value="ECO:0007669"/>
    <property type="project" value="UniProtKB-KW"/>
</dbReference>
<dbReference type="GO" id="GO:0006412">
    <property type="term" value="P:translation"/>
    <property type="evidence" value="ECO:0007669"/>
    <property type="project" value="InterPro"/>
</dbReference>
<dbReference type="FunFam" id="3.30.1230.20:FF:000001">
    <property type="entry name" value="40S ribosomal protein S21"/>
    <property type="match status" value="1"/>
</dbReference>
<dbReference type="Gene3D" id="3.30.1230.20">
    <property type="match status" value="1"/>
</dbReference>
<dbReference type="InterPro" id="IPR001931">
    <property type="entry name" value="Ribosomal_eS21"/>
</dbReference>
<dbReference type="InterPro" id="IPR018279">
    <property type="entry name" value="Ribosomal_eS21_CS"/>
</dbReference>
<dbReference type="InterPro" id="IPR038579">
    <property type="entry name" value="Ribosomal_eS21_sf"/>
</dbReference>
<dbReference type="PANTHER" id="PTHR10442">
    <property type="entry name" value="40S RIBOSOMAL PROTEIN S21"/>
    <property type="match status" value="1"/>
</dbReference>
<dbReference type="Pfam" id="PF01249">
    <property type="entry name" value="Ribosomal_S21e"/>
    <property type="match status" value="1"/>
</dbReference>
<dbReference type="PIRSF" id="PIRSF002148">
    <property type="entry name" value="Ribosomal_S21e"/>
    <property type="match status" value="1"/>
</dbReference>
<dbReference type="PROSITE" id="PS00996">
    <property type="entry name" value="RIBOSOMAL_S21E"/>
    <property type="match status" value="1"/>
</dbReference>
<gene>
    <name type="primary">RpS21</name>
    <name type="synonym">oho23B</name>
    <name type="ORF">GH25136</name>
</gene>
<feature type="chain" id="PRO_0000395417" description="Small ribosomal subunit protein eS21">
    <location>
        <begin position="1"/>
        <end position="83"/>
    </location>
</feature>
<organism>
    <name type="scientific">Drosophila grimshawi</name>
    <name type="common">Hawaiian fruit fly</name>
    <name type="synonym">Idiomyia grimshawi</name>
    <dbReference type="NCBI Taxonomy" id="7222"/>
    <lineage>
        <taxon>Eukaryota</taxon>
        <taxon>Metazoa</taxon>
        <taxon>Ecdysozoa</taxon>
        <taxon>Arthropoda</taxon>
        <taxon>Hexapoda</taxon>
        <taxon>Insecta</taxon>
        <taxon>Pterygota</taxon>
        <taxon>Neoptera</taxon>
        <taxon>Endopterygota</taxon>
        <taxon>Diptera</taxon>
        <taxon>Brachycera</taxon>
        <taxon>Muscomorpha</taxon>
        <taxon>Ephydroidea</taxon>
        <taxon>Drosophilidae</taxon>
        <taxon>Drosophila</taxon>
        <taxon>Hawaiian Drosophila</taxon>
    </lineage>
</organism>
<comment type="function">
    <text evidence="1">May be an associated component of the ribosome rather than a core structural subunit. May act as a translation initiation factor. Has a role in regulation of cell proliferation in the hematopoietic organs and the imaginal disks of larva (By similarity).</text>
</comment>
<comment type="subunit">
    <text evidence="1">Component of the 40S small ribosomal subunit. Interacts with sta.</text>
</comment>
<comment type="subcellular location">
    <subcellularLocation>
        <location evidence="2">Cytoplasm</location>
        <location evidence="2">Cytosol</location>
    </subcellularLocation>
    <subcellularLocation>
        <location evidence="2">Cytoplasm</location>
    </subcellularLocation>
    <subcellularLocation>
        <location evidence="3">Rough endoplasmic reticulum</location>
    </subcellularLocation>
    <text evidence="2 3">Detected on cytosolic polysomes (By similarity). Detected in ribosomes that are associated with the rough endoplasmic reticulum (By similarity).</text>
</comment>
<comment type="similarity">
    <text evidence="4">Belongs to the eukaryotic ribosomal protein eS21 family.</text>
</comment>
<comment type="sequence caution" evidence="5">
    <conflict type="erroneous gene model prediction">
        <sequence resource="EMBL-CDS" id="EDV94086"/>
    </conflict>
</comment>
<reference evidence="6" key="1">
    <citation type="journal article" date="2007" name="Nature">
        <title>Evolution of genes and genomes on the Drosophila phylogeny.</title>
        <authorList>
            <consortium name="Drosophila 12 genomes consortium"/>
        </authorList>
    </citation>
    <scope>NUCLEOTIDE SEQUENCE [LARGE SCALE GENOMIC DNA]</scope>
    <source>
        <strain evidence="6">Tucson 15287-2541.00</strain>
    </source>
</reference>
<proteinExistence type="inferred from homology"/>
<name>RS21_DROGR</name>
<keyword id="KW-0963">Cytoplasm</keyword>
<keyword id="KW-0217">Developmental protein</keyword>
<keyword id="KW-0256">Endoplasmic reticulum</keyword>
<keyword id="KW-1185">Reference proteome</keyword>
<keyword id="KW-0687">Ribonucleoprotein</keyword>
<keyword id="KW-0689">Ribosomal protein</keyword>
<keyword id="KW-0698">rRNA processing</keyword>
<keyword id="KW-0810">Translation regulation</keyword>
<protein>
    <recommendedName>
        <fullName evidence="5">Small ribosomal subunit protein eS21</fullName>
    </recommendedName>
    <alternativeName>
        <fullName evidence="1">40S ribosomal protein S21</fullName>
    </alternativeName>
    <alternativeName>
        <fullName evidence="1">Overgrown hematopoietic organs at 23B</fullName>
    </alternativeName>
</protein>
<sequence length="83" mass="9165">MENDAGENVDLYVPRKCSASNRIIHAKDHASVQLSIVVVDPETGRQTDGTKTYAICGEIRRMGESDDCIVRLAKKDGLITKNF</sequence>